<name>YIHY_ECOHS</name>
<keyword id="KW-0997">Cell inner membrane</keyword>
<keyword id="KW-1003">Cell membrane</keyword>
<keyword id="KW-0472">Membrane</keyword>
<keyword id="KW-0812">Transmembrane</keyword>
<keyword id="KW-1133">Transmembrane helix</keyword>
<dbReference type="EMBL" id="CP000802">
    <property type="protein sequence ID" value="ABV08291.1"/>
    <property type="molecule type" value="Genomic_DNA"/>
</dbReference>
<dbReference type="RefSeq" id="WP_000920762.1">
    <property type="nucleotide sequence ID" value="NC_009800.1"/>
</dbReference>
<dbReference type="KEGG" id="ecx:EcHS_A4111"/>
<dbReference type="HOGENOM" id="CLU_032288_0_0_6"/>
<dbReference type="GO" id="GO:0005886">
    <property type="term" value="C:plasma membrane"/>
    <property type="evidence" value="ECO:0007669"/>
    <property type="project" value="UniProtKB-SubCell"/>
</dbReference>
<dbReference type="HAMAP" id="MF_00672">
    <property type="entry name" value="UPF0761"/>
    <property type="match status" value="1"/>
</dbReference>
<dbReference type="InterPro" id="IPR023679">
    <property type="entry name" value="UPF0761_bac"/>
</dbReference>
<dbReference type="InterPro" id="IPR017039">
    <property type="entry name" value="Virul_fac_BrkB"/>
</dbReference>
<dbReference type="NCBIfam" id="NF002457">
    <property type="entry name" value="PRK01637.1"/>
    <property type="match status" value="1"/>
</dbReference>
<dbReference type="NCBIfam" id="TIGR00765">
    <property type="entry name" value="yihY_not_rbn"/>
    <property type="match status" value="1"/>
</dbReference>
<dbReference type="PANTHER" id="PTHR30213">
    <property type="entry name" value="INNER MEMBRANE PROTEIN YHJD"/>
    <property type="match status" value="1"/>
</dbReference>
<dbReference type="PANTHER" id="PTHR30213:SF0">
    <property type="entry name" value="UPF0761 MEMBRANE PROTEIN YIHY"/>
    <property type="match status" value="1"/>
</dbReference>
<dbReference type="Pfam" id="PF03631">
    <property type="entry name" value="Virul_fac_BrkB"/>
    <property type="match status" value="1"/>
</dbReference>
<dbReference type="PIRSF" id="PIRSF035875">
    <property type="entry name" value="RNase_BN"/>
    <property type="match status" value="1"/>
</dbReference>
<proteinExistence type="inferred from homology"/>
<reference key="1">
    <citation type="journal article" date="2008" name="J. Bacteriol.">
        <title>The pangenome structure of Escherichia coli: comparative genomic analysis of E. coli commensal and pathogenic isolates.</title>
        <authorList>
            <person name="Rasko D.A."/>
            <person name="Rosovitz M.J."/>
            <person name="Myers G.S.A."/>
            <person name="Mongodin E.F."/>
            <person name="Fricke W.F."/>
            <person name="Gajer P."/>
            <person name="Crabtree J."/>
            <person name="Sebaihia M."/>
            <person name="Thomson N.R."/>
            <person name="Chaudhuri R."/>
            <person name="Henderson I.R."/>
            <person name="Sperandio V."/>
            <person name="Ravel J."/>
        </authorList>
    </citation>
    <scope>NUCLEOTIDE SEQUENCE [LARGE SCALE GENOMIC DNA]</scope>
    <source>
        <strain>HS</strain>
    </source>
</reference>
<accession>A8A6Y7</accession>
<organism>
    <name type="scientific">Escherichia coli O9:H4 (strain HS)</name>
    <dbReference type="NCBI Taxonomy" id="331112"/>
    <lineage>
        <taxon>Bacteria</taxon>
        <taxon>Pseudomonadati</taxon>
        <taxon>Pseudomonadota</taxon>
        <taxon>Gammaproteobacteria</taxon>
        <taxon>Enterobacterales</taxon>
        <taxon>Enterobacteriaceae</taxon>
        <taxon>Escherichia</taxon>
    </lineage>
</organism>
<gene>
    <name evidence="1" type="primary">yihY</name>
    <name type="ordered locus">EcHS_A4111</name>
</gene>
<comment type="subcellular location">
    <subcellularLocation>
        <location evidence="1">Cell inner membrane</location>
        <topology evidence="1">Multi-pass membrane protein</topology>
    </subcellularLocation>
</comment>
<comment type="similarity">
    <text evidence="1">Belongs to the UPF0761 family.</text>
</comment>
<evidence type="ECO:0000255" key="1">
    <source>
        <dbReference type="HAMAP-Rule" id="MF_00672"/>
    </source>
</evidence>
<feature type="chain" id="PRO_1000061942" description="UPF0761 membrane protein YihY">
    <location>
        <begin position="1"/>
        <end position="290"/>
    </location>
</feature>
<feature type="transmembrane region" description="Helical" evidence="1">
    <location>
        <begin position="44"/>
        <end position="64"/>
    </location>
</feature>
<feature type="transmembrane region" description="Helical" evidence="1">
    <location>
        <begin position="104"/>
        <end position="124"/>
    </location>
</feature>
<feature type="transmembrane region" description="Helical" evidence="1">
    <location>
        <begin position="140"/>
        <end position="160"/>
    </location>
</feature>
<feature type="transmembrane region" description="Helical" evidence="1">
    <location>
        <begin position="183"/>
        <end position="203"/>
    </location>
</feature>
<feature type="transmembrane region" description="Helical" evidence="1">
    <location>
        <begin position="210"/>
        <end position="230"/>
    </location>
</feature>
<feature type="transmembrane region" description="Helical" evidence="1">
    <location>
        <begin position="244"/>
        <end position="264"/>
    </location>
</feature>
<sequence>MLKTIQDKARHRTRPLWAWLKLLWQRIDEDNMTTLAGNLAYVSLLSLVPLVAVVFALFAAFPMFSDVSIQLRHFIFANFLPATGDVIQRYIEQFVANSNKMTAVGACGLIVTALLLMYSIDSALNTIWRSKRARPKIYSFAVYWMILTLGPLLAGASLAISSYLLSLRWASDLNTVIDNVLRIFPLLLSWISFWLLYSIVPTIRVPNRDAIVGAFVAALLFEAGKKGFALYITMFPSYQLIYGVLAVIPILFVWVYWTWCIVLLGAEITVTLGEYRKLKQAAEQEEDDEP</sequence>
<protein>
    <recommendedName>
        <fullName evidence="1">UPF0761 membrane protein YihY</fullName>
    </recommendedName>
</protein>